<comment type="function">
    <text evidence="1">F(1)F(0) ATP synthase produces ATP from ADP in the presence of a proton or sodium gradient. F-type ATPases consist of two structural domains, F(1) containing the extramembraneous catalytic core and F(0) containing the membrane proton channel, linked together by a central stalk and a peripheral stalk. During catalysis, ATP synthesis in the catalytic domain of F(1) is coupled via a rotary mechanism of the central stalk subunits to proton translocation.</text>
</comment>
<comment type="function">
    <text evidence="1">This protein is part of the stalk that links CF(0) to CF(1). It either transmits conformational changes from CF(0) to CF(1) or is implicated in proton conduction.</text>
</comment>
<comment type="subunit">
    <text evidence="1">F-type ATPases have 2 components, F(1) - the catalytic core - and F(0) - the membrane proton channel. F(1) has five subunits: alpha(3), beta(3), gamma(1), delta(1), epsilon(1). CF(0) has four main subunits: a(1), b(1), b'(1) and c(10-14). The alpha and beta chains form an alternating ring which encloses part of the gamma chain. F(1) is attached to F(0) by a central stalk formed by the gamma and epsilon chains, while a peripheral stalk is formed by the delta, b and b' chains.</text>
</comment>
<comment type="subcellular location">
    <subcellularLocation>
        <location evidence="1">Cellular thylakoid membrane</location>
        <topology evidence="1">Peripheral membrane protein</topology>
    </subcellularLocation>
</comment>
<comment type="similarity">
    <text evidence="1">Belongs to the ATPase delta chain family.</text>
</comment>
<proteinExistence type="inferred from homology"/>
<feature type="chain" id="PRO_0000371187" description="ATP synthase subunit delta">
    <location>
        <begin position="1"/>
        <end position="182"/>
    </location>
</feature>
<gene>
    <name evidence="1" type="primary">atpH</name>
    <name evidence="1" type="synonym">atpD</name>
    <name type="ordered locus">Tery_2200</name>
</gene>
<name>ATPD_TRIEI</name>
<keyword id="KW-0066">ATP synthesis</keyword>
<keyword id="KW-0139">CF(1)</keyword>
<keyword id="KW-0375">Hydrogen ion transport</keyword>
<keyword id="KW-0406">Ion transport</keyword>
<keyword id="KW-0472">Membrane</keyword>
<keyword id="KW-0793">Thylakoid</keyword>
<keyword id="KW-0813">Transport</keyword>
<evidence type="ECO:0000255" key="1">
    <source>
        <dbReference type="HAMAP-Rule" id="MF_01416"/>
    </source>
</evidence>
<dbReference type="EMBL" id="CP000393">
    <property type="protein sequence ID" value="ABG51429.1"/>
    <property type="molecule type" value="Genomic_DNA"/>
</dbReference>
<dbReference type="RefSeq" id="WP_011611798.1">
    <property type="nucleotide sequence ID" value="NC_008312.1"/>
</dbReference>
<dbReference type="SMR" id="Q112Z5"/>
<dbReference type="STRING" id="203124.Tery_2200"/>
<dbReference type="KEGG" id="ter:Tery_2200"/>
<dbReference type="eggNOG" id="COG0712">
    <property type="taxonomic scope" value="Bacteria"/>
</dbReference>
<dbReference type="HOGENOM" id="CLU_085114_4_0_3"/>
<dbReference type="OrthoDB" id="9802471at2"/>
<dbReference type="GO" id="GO:0031676">
    <property type="term" value="C:plasma membrane-derived thylakoid membrane"/>
    <property type="evidence" value="ECO:0007669"/>
    <property type="project" value="UniProtKB-SubCell"/>
</dbReference>
<dbReference type="GO" id="GO:0045259">
    <property type="term" value="C:proton-transporting ATP synthase complex"/>
    <property type="evidence" value="ECO:0007669"/>
    <property type="project" value="UniProtKB-KW"/>
</dbReference>
<dbReference type="GO" id="GO:0046933">
    <property type="term" value="F:proton-transporting ATP synthase activity, rotational mechanism"/>
    <property type="evidence" value="ECO:0007669"/>
    <property type="project" value="UniProtKB-UniRule"/>
</dbReference>
<dbReference type="Gene3D" id="1.10.520.20">
    <property type="entry name" value="N-terminal domain of the delta subunit of the F1F0-ATP synthase"/>
    <property type="match status" value="1"/>
</dbReference>
<dbReference type="HAMAP" id="MF_01416">
    <property type="entry name" value="ATP_synth_delta_bact"/>
    <property type="match status" value="1"/>
</dbReference>
<dbReference type="InterPro" id="IPR026015">
    <property type="entry name" value="ATP_synth_OSCP/delta_N_sf"/>
</dbReference>
<dbReference type="InterPro" id="IPR020781">
    <property type="entry name" value="ATPase_OSCP/d_CS"/>
</dbReference>
<dbReference type="InterPro" id="IPR000711">
    <property type="entry name" value="ATPase_OSCP/dsu"/>
</dbReference>
<dbReference type="NCBIfam" id="TIGR01145">
    <property type="entry name" value="ATP_synt_delta"/>
    <property type="match status" value="1"/>
</dbReference>
<dbReference type="PANTHER" id="PTHR11910">
    <property type="entry name" value="ATP SYNTHASE DELTA CHAIN"/>
    <property type="match status" value="1"/>
</dbReference>
<dbReference type="Pfam" id="PF00213">
    <property type="entry name" value="OSCP"/>
    <property type="match status" value="1"/>
</dbReference>
<dbReference type="PRINTS" id="PR00125">
    <property type="entry name" value="ATPASEDELTA"/>
</dbReference>
<dbReference type="SUPFAM" id="SSF47928">
    <property type="entry name" value="N-terminal domain of the delta subunit of the F1F0-ATP synthase"/>
    <property type="match status" value="1"/>
</dbReference>
<dbReference type="PROSITE" id="PS00389">
    <property type="entry name" value="ATPASE_DELTA"/>
    <property type="match status" value="1"/>
</dbReference>
<reference key="1">
    <citation type="journal article" date="2015" name="Proc. Natl. Acad. Sci. U.S.A.">
        <title>Trichodesmium genome maintains abundant, widespread noncoding DNA in situ, despite oligotrophic lifestyle.</title>
        <authorList>
            <person name="Walworth N."/>
            <person name="Pfreundt U."/>
            <person name="Nelson W.C."/>
            <person name="Mincer T."/>
            <person name="Heidelberg J.F."/>
            <person name="Fu F."/>
            <person name="Waterbury J.B."/>
            <person name="Glavina del Rio T."/>
            <person name="Goodwin L."/>
            <person name="Kyrpides N.C."/>
            <person name="Land M.L."/>
            <person name="Woyke T."/>
            <person name="Hutchins D.A."/>
            <person name="Hess W.R."/>
            <person name="Webb E.A."/>
        </authorList>
    </citation>
    <scope>NUCLEOTIDE SEQUENCE [LARGE SCALE GENOMIC DNA]</scope>
    <source>
        <strain>IMS101</strain>
    </source>
</reference>
<organism>
    <name type="scientific">Trichodesmium erythraeum (strain IMS101)</name>
    <dbReference type="NCBI Taxonomy" id="203124"/>
    <lineage>
        <taxon>Bacteria</taxon>
        <taxon>Bacillati</taxon>
        <taxon>Cyanobacteriota</taxon>
        <taxon>Cyanophyceae</taxon>
        <taxon>Oscillatoriophycideae</taxon>
        <taxon>Oscillatoriales</taxon>
        <taxon>Microcoleaceae</taxon>
        <taxon>Trichodesmium</taxon>
    </lineage>
</organism>
<accession>Q112Z5</accession>
<protein>
    <recommendedName>
        <fullName evidence="1">ATP synthase subunit delta</fullName>
    </recommendedName>
    <alternativeName>
        <fullName evidence="1">ATP synthase F(1) sector subunit delta</fullName>
    </alternativeName>
    <alternativeName>
        <fullName evidence="1">F-type ATPase subunit delta</fullName>
        <shortName evidence="1">F-ATPase subunit delta</shortName>
    </alternativeName>
</protein>
<sequence>MSVIAGEIVEPYAAALMSLAQSKDLTDKFAEDVRSLINILDESPEFKQFVGNPVIKQEDKKAVVKRMLGEQVDPLMRNFLMLLIDKGRITFLEQIGKQYLALLRELNQTVLAEVTSTVELNENQKNTIRERVKSMTSAREVEIETKVDPSILGGVIIKIGSQIIDSSLQGQLRRIGISLKTL</sequence>